<accession>Q5UZI1</accession>
<proteinExistence type="inferred from homology"/>
<protein>
    <recommendedName>
        <fullName evidence="1">Putative HTH-type transcriptional regulatory protein rrnAC2519</fullName>
    </recommendedName>
</protein>
<gene>
    <name type="ordered locus">rrnAC2519</name>
</gene>
<reference key="1">
    <citation type="journal article" date="2004" name="Genome Res.">
        <title>Genome sequence of Haloarcula marismortui: a halophilic archaeon from the Dead Sea.</title>
        <authorList>
            <person name="Baliga N.S."/>
            <person name="Bonneau R."/>
            <person name="Facciotti M.T."/>
            <person name="Pan M."/>
            <person name="Glusman G."/>
            <person name="Deutsch E.W."/>
            <person name="Shannon P."/>
            <person name="Chiu Y."/>
            <person name="Weng R.S."/>
            <person name="Gan R.R."/>
            <person name="Hung P."/>
            <person name="Date S.V."/>
            <person name="Marcotte E."/>
            <person name="Hood L."/>
            <person name="Ng W.V."/>
        </authorList>
    </citation>
    <scope>NUCLEOTIDE SEQUENCE [LARGE SCALE GENOMIC DNA]</scope>
    <source>
        <strain>ATCC 43049 / DSM 3752 / JCM 8966 / VKM B-1809</strain>
    </source>
</reference>
<evidence type="ECO:0000255" key="1">
    <source>
        <dbReference type="HAMAP-Rule" id="MF_00584"/>
    </source>
</evidence>
<dbReference type="EMBL" id="AY596297">
    <property type="protein sequence ID" value="AAV47322.1"/>
    <property type="molecule type" value="Genomic_DNA"/>
</dbReference>
<dbReference type="RefSeq" id="WP_011224273.1">
    <property type="nucleotide sequence ID" value="NC_006396.1"/>
</dbReference>
<dbReference type="SMR" id="Q5UZI1"/>
<dbReference type="STRING" id="272569.rrnAC2519"/>
<dbReference type="PaxDb" id="272569-rrnAC2519"/>
<dbReference type="EnsemblBacteria" id="AAV47322">
    <property type="protein sequence ID" value="AAV47322"/>
    <property type="gene ID" value="rrnAC2519"/>
</dbReference>
<dbReference type="GeneID" id="40153413"/>
<dbReference type="KEGG" id="hma:rrnAC2519"/>
<dbReference type="PATRIC" id="fig|272569.17.peg.3127"/>
<dbReference type="eggNOG" id="arCOG04152">
    <property type="taxonomic scope" value="Archaea"/>
</dbReference>
<dbReference type="HOGENOM" id="CLU_075726_0_0_2"/>
<dbReference type="Proteomes" id="UP000001169">
    <property type="component" value="Chromosome I"/>
</dbReference>
<dbReference type="GO" id="GO:0003677">
    <property type="term" value="F:DNA binding"/>
    <property type="evidence" value="ECO:0007669"/>
    <property type="project" value="UniProtKB-KW"/>
</dbReference>
<dbReference type="GO" id="GO:0003700">
    <property type="term" value="F:DNA-binding transcription factor activity"/>
    <property type="evidence" value="ECO:0007669"/>
    <property type="project" value="UniProtKB-UniRule"/>
</dbReference>
<dbReference type="CDD" id="cd00093">
    <property type="entry name" value="HTH_XRE"/>
    <property type="match status" value="1"/>
</dbReference>
<dbReference type="Gene3D" id="1.10.260.40">
    <property type="entry name" value="lambda repressor-like DNA-binding domains"/>
    <property type="match status" value="1"/>
</dbReference>
<dbReference type="HAMAP" id="MF_00584">
    <property type="entry name" value="HTH_type_cro_C1"/>
    <property type="match status" value="1"/>
</dbReference>
<dbReference type="InterPro" id="IPR020886">
    <property type="entry name" value="Arc_TR_HTH"/>
</dbReference>
<dbReference type="InterPro" id="IPR001387">
    <property type="entry name" value="Cro/C1-type_HTH"/>
</dbReference>
<dbReference type="InterPro" id="IPR010982">
    <property type="entry name" value="Lambda_DNA-bd_dom_sf"/>
</dbReference>
<dbReference type="NCBIfam" id="NF003162">
    <property type="entry name" value="PRK04140.1"/>
    <property type="match status" value="1"/>
</dbReference>
<dbReference type="Pfam" id="PF01381">
    <property type="entry name" value="HTH_3"/>
    <property type="match status" value="1"/>
</dbReference>
<dbReference type="SMART" id="SM00530">
    <property type="entry name" value="HTH_XRE"/>
    <property type="match status" value="1"/>
</dbReference>
<dbReference type="SUPFAM" id="SSF47413">
    <property type="entry name" value="lambda repressor-like DNA-binding domains"/>
    <property type="match status" value="1"/>
</dbReference>
<dbReference type="PROSITE" id="PS50943">
    <property type="entry name" value="HTH_CROC1"/>
    <property type="match status" value="1"/>
</dbReference>
<sequence length="322" mass="35622">MSRSALVENVMAMLEDAGFLVSDRCAIRPKSFDIAARRGEDVLLLKILGNIDAFDAQTGGEMRRLGTYLNATPIVIGLRTRDEELKPGVVYFRHGVPVLSPDTAMDLFVEEVPPLIYAAPGGLYVNIDSEILADVREDRDWSLGRLAKELGVSRRTVSKYEDGMDASVEVAAELEDLFDAPLTSPVSVLDGAEEVRDDEPTPDDPDVAPEDEPIVTVFTRIGFEVHPTDRAPFKSVNESDDEHGQVLAGHSAFTETAEKRARIMSSVGEVTRTRSVYVVDELRRESVEGTALIEKEEMENIEDAIDLRDLIMERGEDREEVA</sequence>
<organism>
    <name type="scientific">Haloarcula marismortui (strain ATCC 43049 / DSM 3752 / JCM 8966 / VKM B-1809)</name>
    <name type="common">Halobacterium marismortui</name>
    <dbReference type="NCBI Taxonomy" id="272569"/>
    <lineage>
        <taxon>Archaea</taxon>
        <taxon>Methanobacteriati</taxon>
        <taxon>Methanobacteriota</taxon>
        <taxon>Stenosarchaea group</taxon>
        <taxon>Halobacteria</taxon>
        <taxon>Halobacteriales</taxon>
        <taxon>Haloarculaceae</taxon>
        <taxon>Haloarcula</taxon>
    </lineage>
</organism>
<name>Y2519_HALMA</name>
<keyword id="KW-0238">DNA-binding</keyword>
<keyword id="KW-1185">Reference proteome</keyword>
<keyword id="KW-0804">Transcription</keyword>
<keyword id="KW-0805">Transcription regulation</keyword>
<feature type="chain" id="PRO_0000259355" description="Putative HTH-type transcriptional regulatory protein rrnAC2519">
    <location>
        <begin position="1"/>
        <end position="322"/>
    </location>
</feature>
<feature type="domain" description="HTH cro/C1-type" evidence="1">
    <location>
        <begin position="132"/>
        <end position="189"/>
    </location>
</feature>
<feature type="DNA-binding region" description="H-T-H motif" evidence="1">
    <location>
        <begin position="143"/>
        <end position="162"/>
    </location>
</feature>